<keyword id="KW-0413">Isomerase</keyword>
<keyword id="KW-0460">Magnesium</keyword>
<keyword id="KW-0479">Metal-binding</keyword>
<keyword id="KW-0597">Phosphoprotein</keyword>
<keyword id="KW-1185">Reference proteome</keyword>
<accession>A4Z0D8</accession>
<sequence>MSRNYFGTDGIRGRANGLITPELALKVGQAAGLLFQRGEHRHRVVIGKDTRLSGYMIEYAMVAGFTSVGMDVLLVGPMPTPAVAMLTKSMRADLGVMISASHNLFEDNGIKLFGPQGFKLSDDVEKQIEQLLDESLDKKLAQSASLGRARRIDGVHDRYIEFAKRTLPRDLSLDGLRVVVDCANGAAYKVVPEALWELGADVISIGVEPDGFNINKECGSTSPEALCRKVREMRADIGIALDGDADRVILVDERGHIVDGDQLLAVIAQSWKEDGRLSRPGIVATVMSNLGLERFLQGQGLELVRTPVGDRYVLERMLADGYNLGGEQSGHIILSDYATTGDGFVAALQVLATVQKLRRPVSEVCHKFDPLPQILKNVRYRSGKPLDTDAVKSAIDTGQKRLNGHGRLLVRSSGTEPVIRVMGEGDDRNLVEEVVDDIVTAVGNAAAAA</sequence>
<feature type="chain" id="PRO_0000301285" description="Phosphoglucosamine mutase">
    <location>
        <begin position="1"/>
        <end position="449"/>
    </location>
</feature>
<feature type="active site" description="Phosphoserine intermediate" evidence="1">
    <location>
        <position position="101"/>
    </location>
</feature>
<feature type="binding site" description="via phosphate group" evidence="1">
    <location>
        <position position="101"/>
    </location>
    <ligand>
        <name>Mg(2+)</name>
        <dbReference type="ChEBI" id="CHEBI:18420"/>
    </ligand>
</feature>
<feature type="binding site" evidence="1">
    <location>
        <position position="242"/>
    </location>
    <ligand>
        <name>Mg(2+)</name>
        <dbReference type="ChEBI" id="CHEBI:18420"/>
    </ligand>
</feature>
<feature type="binding site" evidence="1">
    <location>
        <position position="244"/>
    </location>
    <ligand>
        <name>Mg(2+)</name>
        <dbReference type="ChEBI" id="CHEBI:18420"/>
    </ligand>
</feature>
<feature type="binding site" evidence="1">
    <location>
        <position position="246"/>
    </location>
    <ligand>
        <name>Mg(2+)</name>
        <dbReference type="ChEBI" id="CHEBI:18420"/>
    </ligand>
</feature>
<feature type="modified residue" description="Phosphoserine" evidence="1">
    <location>
        <position position="101"/>
    </location>
</feature>
<comment type="function">
    <text evidence="1">Catalyzes the conversion of glucosamine-6-phosphate to glucosamine-1-phosphate.</text>
</comment>
<comment type="catalytic activity">
    <reaction evidence="1">
        <text>alpha-D-glucosamine 1-phosphate = D-glucosamine 6-phosphate</text>
        <dbReference type="Rhea" id="RHEA:23424"/>
        <dbReference type="ChEBI" id="CHEBI:58516"/>
        <dbReference type="ChEBI" id="CHEBI:58725"/>
        <dbReference type="EC" id="5.4.2.10"/>
    </reaction>
</comment>
<comment type="cofactor">
    <cofactor evidence="1">
        <name>Mg(2+)</name>
        <dbReference type="ChEBI" id="CHEBI:18420"/>
    </cofactor>
    <text evidence="1">Binds 1 Mg(2+) ion per subunit.</text>
</comment>
<comment type="PTM">
    <text evidence="1">Activated by phosphorylation.</text>
</comment>
<comment type="similarity">
    <text evidence="1">Belongs to the phosphohexose mutase family.</text>
</comment>
<proteinExistence type="inferred from homology"/>
<gene>
    <name evidence="1" type="primary">glmM</name>
    <name type="ordered locus">BRADO5957</name>
</gene>
<name>GLMM_BRASO</name>
<protein>
    <recommendedName>
        <fullName evidence="1">Phosphoglucosamine mutase</fullName>
        <ecNumber evidence="1">5.4.2.10</ecNumber>
    </recommendedName>
</protein>
<organism>
    <name type="scientific">Bradyrhizobium sp. (strain ORS 278)</name>
    <dbReference type="NCBI Taxonomy" id="114615"/>
    <lineage>
        <taxon>Bacteria</taxon>
        <taxon>Pseudomonadati</taxon>
        <taxon>Pseudomonadota</taxon>
        <taxon>Alphaproteobacteria</taxon>
        <taxon>Hyphomicrobiales</taxon>
        <taxon>Nitrobacteraceae</taxon>
        <taxon>Bradyrhizobium</taxon>
    </lineage>
</organism>
<dbReference type="EC" id="5.4.2.10" evidence="1"/>
<dbReference type="EMBL" id="CU234118">
    <property type="protein sequence ID" value="CAL79614.1"/>
    <property type="molecule type" value="Genomic_DNA"/>
</dbReference>
<dbReference type="RefSeq" id="WP_012029512.1">
    <property type="nucleotide sequence ID" value="NC_009445.1"/>
</dbReference>
<dbReference type="SMR" id="A4Z0D8"/>
<dbReference type="STRING" id="114615.BRADO5957"/>
<dbReference type="KEGG" id="bra:BRADO5957"/>
<dbReference type="eggNOG" id="COG1109">
    <property type="taxonomic scope" value="Bacteria"/>
</dbReference>
<dbReference type="HOGENOM" id="CLU_016950_7_0_5"/>
<dbReference type="OrthoDB" id="9803322at2"/>
<dbReference type="Proteomes" id="UP000001994">
    <property type="component" value="Chromosome"/>
</dbReference>
<dbReference type="GO" id="GO:0005829">
    <property type="term" value="C:cytosol"/>
    <property type="evidence" value="ECO:0007669"/>
    <property type="project" value="TreeGrafter"/>
</dbReference>
<dbReference type="GO" id="GO:0000287">
    <property type="term" value="F:magnesium ion binding"/>
    <property type="evidence" value="ECO:0007669"/>
    <property type="project" value="UniProtKB-UniRule"/>
</dbReference>
<dbReference type="GO" id="GO:0008966">
    <property type="term" value="F:phosphoglucosamine mutase activity"/>
    <property type="evidence" value="ECO:0007669"/>
    <property type="project" value="UniProtKB-UniRule"/>
</dbReference>
<dbReference type="GO" id="GO:0004615">
    <property type="term" value="F:phosphomannomutase activity"/>
    <property type="evidence" value="ECO:0007669"/>
    <property type="project" value="TreeGrafter"/>
</dbReference>
<dbReference type="GO" id="GO:0005975">
    <property type="term" value="P:carbohydrate metabolic process"/>
    <property type="evidence" value="ECO:0007669"/>
    <property type="project" value="InterPro"/>
</dbReference>
<dbReference type="GO" id="GO:0009252">
    <property type="term" value="P:peptidoglycan biosynthetic process"/>
    <property type="evidence" value="ECO:0007669"/>
    <property type="project" value="TreeGrafter"/>
</dbReference>
<dbReference type="GO" id="GO:0006048">
    <property type="term" value="P:UDP-N-acetylglucosamine biosynthetic process"/>
    <property type="evidence" value="ECO:0007669"/>
    <property type="project" value="TreeGrafter"/>
</dbReference>
<dbReference type="CDD" id="cd05802">
    <property type="entry name" value="GlmM"/>
    <property type="match status" value="1"/>
</dbReference>
<dbReference type="FunFam" id="3.30.310.50:FF:000001">
    <property type="entry name" value="Phosphoglucosamine mutase"/>
    <property type="match status" value="1"/>
</dbReference>
<dbReference type="FunFam" id="3.40.120.10:FF:000001">
    <property type="entry name" value="Phosphoglucosamine mutase"/>
    <property type="match status" value="1"/>
</dbReference>
<dbReference type="FunFam" id="3.40.120.10:FF:000003">
    <property type="entry name" value="Phosphoglucosamine mutase"/>
    <property type="match status" value="1"/>
</dbReference>
<dbReference type="Gene3D" id="3.40.120.10">
    <property type="entry name" value="Alpha-D-Glucose-1,6-Bisphosphate, subunit A, domain 3"/>
    <property type="match status" value="3"/>
</dbReference>
<dbReference type="Gene3D" id="3.30.310.50">
    <property type="entry name" value="Alpha-D-phosphohexomutase, C-terminal domain"/>
    <property type="match status" value="1"/>
</dbReference>
<dbReference type="HAMAP" id="MF_01554_B">
    <property type="entry name" value="GlmM_B"/>
    <property type="match status" value="1"/>
</dbReference>
<dbReference type="InterPro" id="IPR005844">
    <property type="entry name" value="A-D-PHexomutase_a/b/a-I"/>
</dbReference>
<dbReference type="InterPro" id="IPR016055">
    <property type="entry name" value="A-D-PHexomutase_a/b/a-I/II/III"/>
</dbReference>
<dbReference type="InterPro" id="IPR005845">
    <property type="entry name" value="A-D-PHexomutase_a/b/a-II"/>
</dbReference>
<dbReference type="InterPro" id="IPR005846">
    <property type="entry name" value="A-D-PHexomutase_a/b/a-III"/>
</dbReference>
<dbReference type="InterPro" id="IPR005843">
    <property type="entry name" value="A-D-PHexomutase_C"/>
</dbReference>
<dbReference type="InterPro" id="IPR036900">
    <property type="entry name" value="A-D-PHexomutase_C_sf"/>
</dbReference>
<dbReference type="InterPro" id="IPR005841">
    <property type="entry name" value="Alpha-D-phosphohexomutase_SF"/>
</dbReference>
<dbReference type="InterPro" id="IPR006352">
    <property type="entry name" value="GlmM_bact"/>
</dbReference>
<dbReference type="InterPro" id="IPR050060">
    <property type="entry name" value="Phosphoglucosamine_mutase"/>
</dbReference>
<dbReference type="NCBIfam" id="TIGR01455">
    <property type="entry name" value="glmM"/>
    <property type="match status" value="1"/>
</dbReference>
<dbReference type="NCBIfam" id="NF008139">
    <property type="entry name" value="PRK10887.1"/>
    <property type="match status" value="1"/>
</dbReference>
<dbReference type="PANTHER" id="PTHR42946:SF1">
    <property type="entry name" value="PHOSPHOGLUCOMUTASE (ALPHA-D-GLUCOSE-1,6-BISPHOSPHATE-DEPENDENT)"/>
    <property type="match status" value="1"/>
</dbReference>
<dbReference type="PANTHER" id="PTHR42946">
    <property type="entry name" value="PHOSPHOHEXOSE MUTASE"/>
    <property type="match status" value="1"/>
</dbReference>
<dbReference type="Pfam" id="PF02878">
    <property type="entry name" value="PGM_PMM_I"/>
    <property type="match status" value="1"/>
</dbReference>
<dbReference type="Pfam" id="PF02879">
    <property type="entry name" value="PGM_PMM_II"/>
    <property type="match status" value="1"/>
</dbReference>
<dbReference type="Pfam" id="PF02880">
    <property type="entry name" value="PGM_PMM_III"/>
    <property type="match status" value="1"/>
</dbReference>
<dbReference type="Pfam" id="PF00408">
    <property type="entry name" value="PGM_PMM_IV"/>
    <property type="match status" value="1"/>
</dbReference>
<dbReference type="PRINTS" id="PR00509">
    <property type="entry name" value="PGMPMM"/>
</dbReference>
<dbReference type="SUPFAM" id="SSF55957">
    <property type="entry name" value="Phosphoglucomutase, C-terminal domain"/>
    <property type="match status" value="1"/>
</dbReference>
<dbReference type="SUPFAM" id="SSF53738">
    <property type="entry name" value="Phosphoglucomutase, first 3 domains"/>
    <property type="match status" value="3"/>
</dbReference>
<reference key="1">
    <citation type="journal article" date="2007" name="Science">
        <title>Legumes symbioses: absence of nod genes in photosynthetic bradyrhizobia.</title>
        <authorList>
            <person name="Giraud E."/>
            <person name="Moulin L."/>
            <person name="Vallenet D."/>
            <person name="Barbe V."/>
            <person name="Cytryn E."/>
            <person name="Avarre J.-C."/>
            <person name="Jaubert M."/>
            <person name="Simon D."/>
            <person name="Cartieaux F."/>
            <person name="Prin Y."/>
            <person name="Bena G."/>
            <person name="Hannibal L."/>
            <person name="Fardoux J."/>
            <person name="Kojadinovic M."/>
            <person name="Vuillet L."/>
            <person name="Lajus A."/>
            <person name="Cruveiller S."/>
            <person name="Rouy Z."/>
            <person name="Mangenot S."/>
            <person name="Segurens B."/>
            <person name="Dossat C."/>
            <person name="Franck W.L."/>
            <person name="Chang W.-S."/>
            <person name="Saunders E."/>
            <person name="Bruce D."/>
            <person name="Richardson P."/>
            <person name="Normand P."/>
            <person name="Dreyfus B."/>
            <person name="Pignol D."/>
            <person name="Stacey G."/>
            <person name="Emerich D."/>
            <person name="Vermeglio A."/>
            <person name="Medigue C."/>
            <person name="Sadowsky M."/>
        </authorList>
    </citation>
    <scope>NUCLEOTIDE SEQUENCE [LARGE SCALE GENOMIC DNA]</scope>
    <source>
        <strain>ORS 278</strain>
    </source>
</reference>
<evidence type="ECO:0000255" key="1">
    <source>
        <dbReference type="HAMAP-Rule" id="MF_01554"/>
    </source>
</evidence>